<organism>
    <name type="scientific">Salmonella paratyphi A (strain ATCC 9150 / SARB42)</name>
    <dbReference type="NCBI Taxonomy" id="295319"/>
    <lineage>
        <taxon>Bacteria</taxon>
        <taxon>Pseudomonadati</taxon>
        <taxon>Pseudomonadota</taxon>
        <taxon>Gammaproteobacteria</taxon>
        <taxon>Enterobacterales</taxon>
        <taxon>Enterobacteriaceae</taxon>
        <taxon>Salmonella</taxon>
    </lineage>
</organism>
<gene>
    <name evidence="1" type="primary">rhaR</name>
    <name type="ordered locus">SPA3892</name>
</gene>
<accession>Q5PKG1</accession>
<evidence type="ECO:0000255" key="1">
    <source>
        <dbReference type="HAMAP-Rule" id="MF_01533"/>
    </source>
</evidence>
<feature type="chain" id="PRO_0000194557" description="HTH-type transcriptional activator RhaR">
    <location>
        <begin position="1"/>
        <end position="282"/>
    </location>
</feature>
<feature type="domain" description="HTH araC/xylS-type" evidence="1">
    <location>
        <begin position="179"/>
        <end position="277"/>
    </location>
</feature>
<feature type="DNA-binding region" description="H-T-H motif" evidence="1">
    <location>
        <begin position="196"/>
        <end position="217"/>
    </location>
</feature>
<feature type="DNA-binding region" description="H-T-H motif" evidence="1">
    <location>
        <begin position="244"/>
        <end position="267"/>
    </location>
</feature>
<feature type="site" description="Interaction with sigma-70" evidence="1">
    <location>
        <position position="246"/>
    </location>
</feature>
<sequence length="282" mass="32858">MANQLILLKKDFFTDEQQAVTVADRYPQDVFAEHTHEFCELVMVWRGNGLHVLNERPYRITRGDLFYIRAEDKHSYTSVNDLVLQNIIYCPERLKLNVNWQAMIPGFQGAQWHPHWRLGSMGMNQARQVINQLEHESNGRDPLANEMAELLFGQLVMTLKRHRYATDDLPATSRETLLDKLITALANSLECPFALDAFCQQEQCSERVLRQQFRAQTGMTINQYLRQVRICHAQYLLQHSPLMISEISMQCGFEDSNYFSVVFTRETGMTPSQWRHLSNQSD</sequence>
<dbReference type="EMBL" id="CP000026">
    <property type="protein sequence ID" value="AAV79658.1"/>
    <property type="molecule type" value="Genomic_DNA"/>
</dbReference>
<dbReference type="RefSeq" id="WP_000013290.1">
    <property type="nucleotide sequence ID" value="NC_006511.1"/>
</dbReference>
<dbReference type="SMR" id="Q5PKG1"/>
<dbReference type="DNASU" id="3175821"/>
<dbReference type="KEGG" id="spt:SPA3892"/>
<dbReference type="HOGENOM" id="CLU_000445_88_5_6"/>
<dbReference type="Proteomes" id="UP000008185">
    <property type="component" value="Chromosome"/>
</dbReference>
<dbReference type="GO" id="GO:0005737">
    <property type="term" value="C:cytoplasm"/>
    <property type="evidence" value="ECO:0007669"/>
    <property type="project" value="UniProtKB-SubCell"/>
</dbReference>
<dbReference type="GO" id="GO:0003700">
    <property type="term" value="F:DNA-binding transcription factor activity"/>
    <property type="evidence" value="ECO:0007669"/>
    <property type="project" value="UniProtKB-UniRule"/>
</dbReference>
<dbReference type="GO" id="GO:0043565">
    <property type="term" value="F:sequence-specific DNA binding"/>
    <property type="evidence" value="ECO:0007669"/>
    <property type="project" value="InterPro"/>
</dbReference>
<dbReference type="GO" id="GO:0045893">
    <property type="term" value="P:positive regulation of DNA-templated transcription"/>
    <property type="evidence" value="ECO:0007669"/>
    <property type="project" value="UniProtKB-UniRule"/>
</dbReference>
<dbReference type="GO" id="GO:0019299">
    <property type="term" value="P:rhamnose metabolic process"/>
    <property type="evidence" value="ECO:0007669"/>
    <property type="project" value="UniProtKB-UniRule"/>
</dbReference>
<dbReference type="CDD" id="cd06977">
    <property type="entry name" value="cupin_RhaR_RhaS-like_N"/>
    <property type="match status" value="1"/>
</dbReference>
<dbReference type="Gene3D" id="1.10.10.60">
    <property type="entry name" value="Homeodomain-like"/>
    <property type="match status" value="2"/>
</dbReference>
<dbReference type="Gene3D" id="2.60.120.10">
    <property type="entry name" value="Jelly Rolls"/>
    <property type="match status" value="1"/>
</dbReference>
<dbReference type="HAMAP" id="MF_01533">
    <property type="entry name" value="HTH_type_RhaR"/>
    <property type="match status" value="1"/>
</dbReference>
<dbReference type="InterPro" id="IPR003313">
    <property type="entry name" value="AraC-bd"/>
</dbReference>
<dbReference type="InterPro" id="IPR009057">
    <property type="entry name" value="Homeodomain-like_sf"/>
</dbReference>
<dbReference type="InterPro" id="IPR018060">
    <property type="entry name" value="HTH_AraC"/>
</dbReference>
<dbReference type="InterPro" id="IPR018062">
    <property type="entry name" value="HTH_AraC-typ_CS"/>
</dbReference>
<dbReference type="InterPro" id="IPR047220">
    <property type="entry name" value="RhaR_RhaS-like_N"/>
</dbReference>
<dbReference type="InterPro" id="IPR014710">
    <property type="entry name" value="RmlC-like_jellyroll"/>
</dbReference>
<dbReference type="InterPro" id="IPR011051">
    <property type="entry name" value="RmlC_Cupin_sf"/>
</dbReference>
<dbReference type="InterPro" id="IPR023699">
    <property type="entry name" value="Tscrpt_act_RhaR"/>
</dbReference>
<dbReference type="InterPro" id="IPR020449">
    <property type="entry name" value="Tscrpt_reg_AraC-type_HTH"/>
</dbReference>
<dbReference type="NCBIfam" id="NF010025">
    <property type="entry name" value="PRK13500.1"/>
    <property type="match status" value="1"/>
</dbReference>
<dbReference type="NCBIfam" id="NF010026">
    <property type="entry name" value="PRK13501.1"/>
    <property type="match status" value="1"/>
</dbReference>
<dbReference type="NCBIfam" id="NF010027">
    <property type="entry name" value="PRK13502.1"/>
    <property type="match status" value="1"/>
</dbReference>
<dbReference type="PANTHER" id="PTHR43280">
    <property type="entry name" value="ARAC-FAMILY TRANSCRIPTIONAL REGULATOR"/>
    <property type="match status" value="1"/>
</dbReference>
<dbReference type="PANTHER" id="PTHR43280:SF13">
    <property type="entry name" value="HTH-TYPE TRANSCRIPTIONAL ACTIVATOR RHAR"/>
    <property type="match status" value="1"/>
</dbReference>
<dbReference type="Pfam" id="PF02311">
    <property type="entry name" value="AraC_binding"/>
    <property type="match status" value="1"/>
</dbReference>
<dbReference type="Pfam" id="PF12833">
    <property type="entry name" value="HTH_18"/>
    <property type="match status" value="1"/>
</dbReference>
<dbReference type="PRINTS" id="PR00032">
    <property type="entry name" value="HTHARAC"/>
</dbReference>
<dbReference type="SMART" id="SM00342">
    <property type="entry name" value="HTH_ARAC"/>
    <property type="match status" value="1"/>
</dbReference>
<dbReference type="SUPFAM" id="SSF46689">
    <property type="entry name" value="Homeodomain-like"/>
    <property type="match status" value="1"/>
</dbReference>
<dbReference type="SUPFAM" id="SSF51182">
    <property type="entry name" value="RmlC-like cupins"/>
    <property type="match status" value="1"/>
</dbReference>
<dbReference type="PROSITE" id="PS00041">
    <property type="entry name" value="HTH_ARAC_FAMILY_1"/>
    <property type="match status" value="1"/>
</dbReference>
<dbReference type="PROSITE" id="PS01124">
    <property type="entry name" value="HTH_ARAC_FAMILY_2"/>
    <property type="match status" value="1"/>
</dbReference>
<protein>
    <recommendedName>
        <fullName evidence="1">HTH-type transcriptional activator RhaR</fullName>
    </recommendedName>
    <alternativeName>
        <fullName evidence="1">L-rhamnose operon transcriptional activator RhaR</fullName>
    </alternativeName>
</protein>
<keyword id="KW-0010">Activator</keyword>
<keyword id="KW-0963">Cytoplasm</keyword>
<keyword id="KW-0238">DNA-binding</keyword>
<keyword id="KW-0677">Repeat</keyword>
<keyword id="KW-0684">Rhamnose metabolism</keyword>
<keyword id="KW-0804">Transcription</keyword>
<keyword id="KW-0805">Transcription regulation</keyword>
<reference key="1">
    <citation type="journal article" date="2004" name="Nat. Genet.">
        <title>Comparison of genome degradation in Paratyphi A and Typhi, human-restricted serovars of Salmonella enterica that cause typhoid.</title>
        <authorList>
            <person name="McClelland M."/>
            <person name="Sanderson K.E."/>
            <person name="Clifton S.W."/>
            <person name="Latreille P."/>
            <person name="Porwollik S."/>
            <person name="Sabo A."/>
            <person name="Meyer R."/>
            <person name="Bieri T."/>
            <person name="Ozersky P."/>
            <person name="McLellan M."/>
            <person name="Harkins C.R."/>
            <person name="Wang C."/>
            <person name="Nguyen C."/>
            <person name="Berghoff A."/>
            <person name="Elliott G."/>
            <person name="Kohlberg S."/>
            <person name="Strong C."/>
            <person name="Du F."/>
            <person name="Carter J."/>
            <person name="Kremizki C."/>
            <person name="Layman D."/>
            <person name="Leonard S."/>
            <person name="Sun H."/>
            <person name="Fulton L."/>
            <person name="Nash W."/>
            <person name="Miner T."/>
            <person name="Minx P."/>
            <person name="Delehaunty K."/>
            <person name="Fronick C."/>
            <person name="Magrini V."/>
            <person name="Nhan M."/>
            <person name="Warren W."/>
            <person name="Florea L."/>
            <person name="Spieth J."/>
            <person name="Wilson R.K."/>
        </authorList>
    </citation>
    <scope>NUCLEOTIDE SEQUENCE [LARGE SCALE GENOMIC DNA]</scope>
    <source>
        <strain>ATCC 9150 / SARB42</strain>
    </source>
</reference>
<proteinExistence type="inferred from homology"/>
<name>RHAR_SALPA</name>
<comment type="function">
    <text evidence="1">Activates expression of the rhaSR operon in response to L-rhamnose.</text>
</comment>
<comment type="subunit">
    <text evidence="1">Binds DNA as a dimer.</text>
</comment>
<comment type="subcellular location">
    <subcellularLocation>
        <location evidence="1">Cytoplasm</location>
    </subcellularLocation>
</comment>